<accession>P9WL57</accession>
<accession>L0TCY3</accession>
<accession>P65037</accession>
<accession>P71934</accession>
<reference key="1">
    <citation type="journal article" date="1998" name="Nature">
        <title>Deciphering the biology of Mycobacterium tuberculosis from the complete genome sequence.</title>
        <authorList>
            <person name="Cole S.T."/>
            <person name="Brosch R."/>
            <person name="Parkhill J."/>
            <person name="Garnier T."/>
            <person name="Churcher C.M."/>
            <person name="Harris D.E."/>
            <person name="Gordon S.V."/>
            <person name="Eiglmeier K."/>
            <person name="Gas S."/>
            <person name="Barry C.E. III"/>
            <person name="Tekaia F."/>
            <person name="Badcock K."/>
            <person name="Basham D."/>
            <person name="Brown D."/>
            <person name="Chillingworth T."/>
            <person name="Connor R."/>
            <person name="Davies R.M."/>
            <person name="Devlin K."/>
            <person name="Feltwell T."/>
            <person name="Gentles S."/>
            <person name="Hamlin N."/>
            <person name="Holroyd S."/>
            <person name="Hornsby T."/>
            <person name="Jagels K."/>
            <person name="Krogh A."/>
            <person name="McLean J."/>
            <person name="Moule S."/>
            <person name="Murphy L.D."/>
            <person name="Oliver S."/>
            <person name="Osborne J."/>
            <person name="Quail M.A."/>
            <person name="Rajandream M.A."/>
            <person name="Rogers J."/>
            <person name="Rutter S."/>
            <person name="Seeger K."/>
            <person name="Skelton S."/>
            <person name="Squares S."/>
            <person name="Squares R."/>
            <person name="Sulston J.E."/>
            <person name="Taylor K."/>
            <person name="Whitehead S."/>
            <person name="Barrell B.G."/>
        </authorList>
    </citation>
    <scope>NUCLEOTIDE SEQUENCE [LARGE SCALE GENOMIC DNA]</scope>
    <source>
        <strain>ATCC 25618 / H37Rv</strain>
    </source>
</reference>
<gene>
    <name type="ordered locus">Rv2635</name>
    <name type="ORF">MTCY441.05</name>
</gene>
<dbReference type="EMBL" id="AL123456">
    <property type="protein sequence ID" value="CCP45433.1"/>
    <property type="molecule type" value="Genomic_DNA"/>
</dbReference>
<dbReference type="PIR" id="G70963">
    <property type="entry name" value="G70963"/>
</dbReference>
<dbReference type="RefSeq" id="NP_217151.1">
    <property type="nucleotide sequence ID" value="NC_000962.3"/>
</dbReference>
<dbReference type="RefSeq" id="WP_003899405.1">
    <property type="nucleotide sequence ID" value="NZ_NVQJ01000077.1"/>
</dbReference>
<dbReference type="STRING" id="83332.Rv2635"/>
<dbReference type="PaxDb" id="83332-Rv2635"/>
<dbReference type="DNASU" id="887813"/>
<dbReference type="GeneID" id="887813"/>
<dbReference type="KEGG" id="mtu:Rv2635"/>
<dbReference type="KEGG" id="mtv:RVBD_2635"/>
<dbReference type="TubercuList" id="Rv2635"/>
<dbReference type="InParanoid" id="P9WL57"/>
<dbReference type="Proteomes" id="UP000001584">
    <property type="component" value="Chromosome"/>
</dbReference>
<evidence type="ECO:0000255" key="1"/>
<evidence type="ECO:0000256" key="2">
    <source>
        <dbReference type="SAM" id="MobiDB-lite"/>
    </source>
</evidence>
<sequence length="80" mass="8937">MVAADHRALGSNKSYPASQTAEAIWPPARTLRYDRQSPWLATGFDRRMSQTVTGVGVQNCAVSKRRCSAVDHSSRTPYRR</sequence>
<feature type="signal peptide" evidence="1">
    <location>
        <begin position="1"/>
        <end position="20"/>
    </location>
</feature>
<feature type="chain" id="PRO_0000014144" description="Uncharacterized protein Rv2635">
    <location>
        <begin position="21"/>
        <end position="80"/>
    </location>
</feature>
<feature type="region of interest" description="Disordered" evidence="2">
    <location>
        <begin position="1"/>
        <end position="21"/>
    </location>
</feature>
<feature type="compositionally biased region" description="Polar residues" evidence="2">
    <location>
        <begin position="11"/>
        <end position="21"/>
    </location>
</feature>
<protein>
    <recommendedName>
        <fullName>Uncharacterized protein Rv2635</fullName>
    </recommendedName>
</protein>
<keyword id="KW-1185">Reference proteome</keyword>
<keyword id="KW-0732">Signal</keyword>
<proteinExistence type="inferred from homology"/>
<organism>
    <name type="scientific">Mycobacterium tuberculosis (strain ATCC 25618 / H37Rv)</name>
    <dbReference type="NCBI Taxonomy" id="83332"/>
    <lineage>
        <taxon>Bacteria</taxon>
        <taxon>Bacillati</taxon>
        <taxon>Actinomycetota</taxon>
        <taxon>Actinomycetes</taxon>
        <taxon>Mycobacteriales</taxon>
        <taxon>Mycobacteriaceae</taxon>
        <taxon>Mycobacterium</taxon>
        <taxon>Mycobacterium tuberculosis complex</taxon>
    </lineage>
</organism>
<name>Y2635_MYCTU</name>